<gene>
    <name type="primary">MDV093</name>
</gene>
<dbReference type="EMBL" id="AF243438">
    <property type="protein sequence ID" value="AAG14267.1"/>
    <property type="molecule type" value="Genomic_DNA"/>
</dbReference>
<dbReference type="RefSeq" id="YP_001034010.1">
    <property type="nucleotide sequence ID" value="NC_002229.3"/>
</dbReference>
<dbReference type="GeneID" id="4811452"/>
<dbReference type="KEGG" id="vg:4811452"/>
<dbReference type="Proteomes" id="UP000008072">
    <property type="component" value="Segment"/>
</dbReference>
<protein>
    <recommendedName>
        <fullName>Uncharacterized gene 93 protein</fullName>
    </recommendedName>
</protein>
<feature type="chain" id="PRO_0000406595" description="Uncharacterized gene 93 protein">
    <location>
        <begin position="1"/>
        <end position="147"/>
    </location>
</feature>
<reference key="1">
    <citation type="journal article" date="2000" name="J. Virol.">
        <title>The genome of a very virulent Marek's disease virus.</title>
        <authorList>
            <person name="Tulman E.R."/>
            <person name="Afonso C.L."/>
            <person name="Lu Z."/>
            <person name="Zsak L."/>
            <person name="Rock D.L."/>
            <person name="Kutish G.F."/>
        </authorList>
    </citation>
    <scope>NUCLEOTIDE SEQUENCE [LARGE SCALE GENOMIC DNA]</scope>
</reference>
<keyword id="KW-1185">Reference proteome</keyword>
<accession>Q9E6L7</accession>
<name>VG93_GAHVM</name>
<proteinExistence type="predicted"/>
<sequence length="147" mass="16862">MAPSGPTPYSHRPQIKHYGTFLDCMRYTLNDESKVDDRCSDIHNSLAQSNVTSSMSVMNDSEEYPLINGPSMQAEDPKSVFYKVRKPDRSRDFSWQNLNSHGNSGLRREKYIRSSKRRWKNPEIFKVSLKCESIGAGNGIKISFSFF</sequence>
<organism>
    <name type="scientific">Gallid herpesvirus 2 (strain Chicken/Md5/ATCC VR-987)</name>
    <name type="common">GaHV-2</name>
    <name type="synonym">Marek's disease herpesvirus type 1</name>
    <dbReference type="NCBI Taxonomy" id="10389"/>
    <lineage>
        <taxon>Viruses</taxon>
        <taxon>Duplodnaviria</taxon>
        <taxon>Heunggongvirae</taxon>
        <taxon>Peploviricota</taxon>
        <taxon>Herviviricetes</taxon>
        <taxon>Herpesvirales</taxon>
        <taxon>Orthoherpesviridae</taxon>
        <taxon>Alphaherpesvirinae</taxon>
        <taxon>Mardivirus</taxon>
        <taxon>Mardivirus gallidalpha2</taxon>
        <taxon>Gallid alphaherpesvirus 2</taxon>
    </lineage>
</organism>
<organismHost>
    <name type="scientific">Gallus gallus</name>
    <name type="common">Chicken</name>
    <dbReference type="NCBI Taxonomy" id="9031"/>
</organismHost>